<accession>Q7F830</accession>
<accession>A0A0P0V073</accession>
<accession>Q9SSZ6</accession>
<organism>
    <name type="scientific">Oryza sativa subsp. japonica</name>
    <name type="common">Rice</name>
    <dbReference type="NCBI Taxonomy" id="39947"/>
    <lineage>
        <taxon>Eukaryota</taxon>
        <taxon>Viridiplantae</taxon>
        <taxon>Streptophyta</taxon>
        <taxon>Embryophyta</taxon>
        <taxon>Tracheophyta</taxon>
        <taxon>Spermatophyta</taxon>
        <taxon>Magnoliopsida</taxon>
        <taxon>Liliopsida</taxon>
        <taxon>Poales</taxon>
        <taxon>Poaceae</taxon>
        <taxon>BOP clade</taxon>
        <taxon>Oryzoideae</taxon>
        <taxon>Oryzeae</taxon>
        <taxon>Oryzinae</taxon>
        <taxon>Oryza</taxon>
        <taxon>Oryza sativa</taxon>
    </lineage>
</organism>
<proteinExistence type="evidence at transcript level"/>
<feature type="chain" id="PRO_0000286989" description="Cyclin-A1-1">
    <location>
        <begin position="1"/>
        <end position="508"/>
    </location>
</feature>
<feature type="region of interest" description="Disordered" evidence="1">
    <location>
        <begin position="1"/>
        <end position="40"/>
    </location>
</feature>
<feature type="region of interest" description="Disordered" evidence="1">
    <location>
        <begin position="82"/>
        <end position="125"/>
    </location>
</feature>
<feature type="compositionally biased region" description="Low complexity" evidence="1">
    <location>
        <begin position="1"/>
        <end position="28"/>
    </location>
</feature>
<feature type="compositionally biased region" description="Gly residues" evidence="1">
    <location>
        <begin position="29"/>
        <end position="39"/>
    </location>
</feature>
<feature type="compositionally biased region" description="Low complexity" evidence="1">
    <location>
        <begin position="98"/>
        <end position="111"/>
    </location>
</feature>
<dbReference type="EMBL" id="AB024986">
    <property type="protein sequence ID" value="BAA86628.1"/>
    <property type="molecule type" value="mRNA"/>
</dbReference>
<dbReference type="EMBL" id="AP002481">
    <property type="protein sequence ID" value="BAA96590.1"/>
    <property type="molecule type" value="Genomic_DNA"/>
</dbReference>
<dbReference type="EMBL" id="AP008207">
    <property type="protein sequence ID" value="BAF04426.1"/>
    <property type="molecule type" value="Genomic_DNA"/>
</dbReference>
<dbReference type="EMBL" id="AP014957">
    <property type="protein sequence ID" value="BAS71197.1"/>
    <property type="molecule type" value="Genomic_DNA"/>
</dbReference>
<dbReference type="SMR" id="Q7F830"/>
<dbReference type="FunCoup" id="Q7F830">
    <property type="interactions" value="813"/>
</dbReference>
<dbReference type="STRING" id="39947.Q7F830"/>
<dbReference type="PaxDb" id="39947-Q7F830"/>
<dbReference type="EnsemblPlants" id="Os01t0233500-01">
    <property type="protein sequence ID" value="Os01t0233500-01"/>
    <property type="gene ID" value="Os01g0233500"/>
</dbReference>
<dbReference type="GeneID" id="4324288"/>
<dbReference type="Gramene" id="Os01t0233500-01">
    <property type="protein sequence ID" value="Os01t0233500-01"/>
    <property type="gene ID" value="Os01g0233500"/>
</dbReference>
<dbReference type="KEGG" id="dosa:Os01g0233500"/>
<dbReference type="KEGG" id="osa:4324288"/>
<dbReference type="eggNOG" id="KOG0654">
    <property type="taxonomic scope" value="Eukaryota"/>
</dbReference>
<dbReference type="HOGENOM" id="CLU_020695_13_2_1"/>
<dbReference type="InParanoid" id="Q7F830"/>
<dbReference type="OMA" id="MDETMSS"/>
<dbReference type="OrthoDB" id="5590282at2759"/>
<dbReference type="Proteomes" id="UP000000763">
    <property type="component" value="Chromosome 1"/>
</dbReference>
<dbReference type="Proteomes" id="UP000059680">
    <property type="component" value="Chromosome 1"/>
</dbReference>
<dbReference type="GO" id="GO:0000307">
    <property type="term" value="C:cyclin-dependent protein kinase holoenzyme complex"/>
    <property type="evidence" value="ECO:0000318"/>
    <property type="project" value="GO_Central"/>
</dbReference>
<dbReference type="GO" id="GO:0005737">
    <property type="term" value="C:cytoplasm"/>
    <property type="evidence" value="ECO:0000318"/>
    <property type="project" value="GO_Central"/>
</dbReference>
<dbReference type="GO" id="GO:0005634">
    <property type="term" value="C:nucleus"/>
    <property type="evidence" value="ECO:0000318"/>
    <property type="project" value="GO_Central"/>
</dbReference>
<dbReference type="GO" id="GO:0016538">
    <property type="term" value="F:cyclin-dependent protein serine/threonine kinase regulator activity"/>
    <property type="evidence" value="ECO:0000318"/>
    <property type="project" value="GO_Central"/>
</dbReference>
<dbReference type="GO" id="GO:0051301">
    <property type="term" value="P:cell division"/>
    <property type="evidence" value="ECO:0007669"/>
    <property type="project" value="UniProtKB-KW"/>
</dbReference>
<dbReference type="GO" id="GO:0000082">
    <property type="term" value="P:G1/S transition of mitotic cell cycle"/>
    <property type="evidence" value="ECO:0000318"/>
    <property type="project" value="GO_Central"/>
</dbReference>
<dbReference type="CDD" id="cd20506">
    <property type="entry name" value="CYCLIN_AtCycA-like_rpt2"/>
    <property type="match status" value="1"/>
</dbReference>
<dbReference type="CDD" id="cd20562">
    <property type="entry name" value="CYCLIN_AtCycA_like_rpt1"/>
    <property type="match status" value="1"/>
</dbReference>
<dbReference type="FunFam" id="1.10.472.10:FF:000013">
    <property type="entry name" value="Cyclin A1"/>
    <property type="match status" value="1"/>
</dbReference>
<dbReference type="FunFam" id="1.10.472.10:FF:000103">
    <property type="entry name" value="Cyclin B1"/>
    <property type="match status" value="1"/>
</dbReference>
<dbReference type="FunFam" id="1.10.472.10:FF:000167">
    <property type="entry name" value="Mitotic cyclin 6"/>
    <property type="match status" value="1"/>
</dbReference>
<dbReference type="Gene3D" id="1.10.472.10">
    <property type="entry name" value="Cyclin-like"/>
    <property type="match status" value="2"/>
</dbReference>
<dbReference type="InterPro" id="IPR039361">
    <property type="entry name" value="Cyclin"/>
</dbReference>
<dbReference type="InterPro" id="IPR013763">
    <property type="entry name" value="Cyclin-like_dom"/>
</dbReference>
<dbReference type="InterPro" id="IPR036915">
    <property type="entry name" value="Cyclin-like_sf"/>
</dbReference>
<dbReference type="InterPro" id="IPR046965">
    <property type="entry name" value="Cyclin_A/B-like"/>
</dbReference>
<dbReference type="InterPro" id="IPR004367">
    <property type="entry name" value="Cyclin_C-dom"/>
</dbReference>
<dbReference type="InterPro" id="IPR006671">
    <property type="entry name" value="Cyclin_N"/>
</dbReference>
<dbReference type="InterPro" id="IPR048258">
    <property type="entry name" value="Cyclins_cyclin-box"/>
</dbReference>
<dbReference type="PANTHER" id="PTHR10177">
    <property type="entry name" value="CYCLINS"/>
    <property type="match status" value="1"/>
</dbReference>
<dbReference type="Pfam" id="PF02984">
    <property type="entry name" value="Cyclin_C"/>
    <property type="match status" value="1"/>
</dbReference>
<dbReference type="Pfam" id="PF00134">
    <property type="entry name" value="Cyclin_N"/>
    <property type="match status" value="1"/>
</dbReference>
<dbReference type="PIRSF" id="PIRSF001771">
    <property type="entry name" value="Cyclin_A_B_D_E"/>
    <property type="match status" value="1"/>
</dbReference>
<dbReference type="SMART" id="SM00385">
    <property type="entry name" value="CYCLIN"/>
    <property type="match status" value="2"/>
</dbReference>
<dbReference type="SMART" id="SM01332">
    <property type="entry name" value="Cyclin_C"/>
    <property type="match status" value="1"/>
</dbReference>
<dbReference type="SUPFAM" id="SSF47954">
    <property type="entry name" value="Cyclin-like"/>
    <property type="match status" value="2"/>
</dbReference>
<dbReference type="PROSITE" id="PS00292">
    <property type="entry name" value="CYCLINS"/>
    <property type="match status" value="1"/>
</dbReference>
<keyword id="KW-0131">Cell cycle</keyword>
<keyword id="KW-0132">Cell division</keyword>
<keyword id="KW-0195">Cyclin</keyword>
<keyword id="KW-0498">Mitosis</keyword>
<keyword id="KW-1185">Reference proteome</keyword>
<reference key="1">
    <citation type="journal article" date="1999" name="Mol. Gen. Genet.">
        <title>Molecular characterization of mitotic cyclins in rice plants.</title>
        <authorList>
            <person name="Umeda M."/>
            <person name="Iwamoto N."/>
            <person name="Umeda-Hara C."/>
            <person name="Yamaguchi M."/>
            <person name="Hashimoto J."/>
            <person name="Uchimiya H."/>
        </authorList>
    </citation>
    <scope>NUCLEOTIDE SEQUENCE [MRNA]</scope>
    <scope>FUNCTION</scope>
    <scope>TISSUE SPECIFICITY</scope>
    <scope>DEVELOPMENTAL STAGE</scope>
    <source>
        <strain>cv. Yamahoushi</strain>
    </source>
</reference>
<reference key="2">
    <citation type="journal article" date="2002" name="Nature">
        <title>The genome sequence and structure of rice chromosome 1.</title>
        <authorList>
            <person name="Sasaki T."/>
            <person name="Matsumoto T."/>
            <person name="Yamamoto K."/>
            <person name="Sakata K."/>
            <person name="Baba T."/>
            <person name="Katayose Y."/>
            <person name="Wu J."/>
            <person name="Niimura Y."/>
            <person name="Cheng Z."/>
            <person name="Nagamura Y."/>
            <person name="Antonio B.A."/>
            <person name="Kanamori H."/>
            <person name="Hosokawa S."/>
            <person name="Masukawa M."/>
            <person name="Arikawa K."/>
            <person name="Chiden Y."/>
            <person name="Hayashi M."/>
            <person name="Okamoto M."/>
            <person name="Ando T."/>
            <person name="Aoki H."/>
            <person name="Arita K."/>
            <person name="Hamada M."/>
            <person name="Harada C."/>
            <person name="Hijishita S."/>
            <person name="Honda M."/>
            <person name="Ichikawa Y."/>
            <person name="Idonuma A."/>
            <person name="Iijima M."/>
            <person name="Ikeda M."/>
            <person name="Ikeno M."/>
            <person name="Ito S."/>
            <person name="Ito T."/>
            <person name="Ito Y."/>
            <person name="Ito Y."/>
            <person name="Iwabuchi A."/>
            <person name="Kamiya K."/>
            <person name="Karasawa W."/>
            <person name="Katagiri S."/>
            <person name="Kikuta A."/>
            <person name="Kobayashi N."/>
            <person name="Kono I."/>
            <person name="Machita K."/>
            <person name="Maehara T."/>
            <person name="Mizuno H."/>
            <person name="Mizubayashi T."/>
            <person name="Mukai Y."/>
            <person name="Nagasaki H."/>
            <person name="Nakashima M."/>
            <person name="Nakama Y."/>
            <person name="Nakamichi Y."/>
            <person name="Nakamura M."/>
            <person name="Namiki N."/>
            <person name="Negishi M."/>
            <person name="Ohta I."/>
            <person name="Ono N."/>
            <person name="Saji S."/>
            <person name="Sakai K."/>
            <person name="Shibata M."/>
            <person name="Shimokawa T."/>
            <person name="Shomura A."/>
            <person name="Song J."/>
            <person name="Takazaki Y."/>
            <person name="Terasawa K."/>
            <person name="Tsuji K."/>
            <person name="Waki K."/>
            <person name="Yamagata H."/>
            <person name="Yamane H."/>
            <person name="Yoshiki S."/>
            <person name="Yoshihara R."/>
            <person name="Yukawa K."/>
            <person name="Zhong H."/>
            <person name="Iwama H."/>
            <person name="Endo T."/>
            <person name="Ito H."/>
            <person name="Hahn J.H."/>
            <person name="Kim H.-I."/>
            <person name="Eun M.-Y."/>
            <person name="Yano M."/>
            <person name="Jiang J."/>
            <person name="Gojobori T."/>
        </authorList>
    </citation>
    <scope>NUCLEOTIDE SEQUENCE [LARGE SCALE GENOMIC DNA]</scope>
    <source>
        <strain>cv. Nipponbare</strain>
    </source>
</reference>
<reference key="3">
    <citation type="journal article" date="2005" name="Nature">
        <title>The map-based sequence of the rice genome.</title>
        <authorList>
            <consortium name="International rice genome sequencing project (IRGSP)"/>
        </authorList>
    </citation>
    <scope>NUCLEOTIDE SEQUENCE [LARGE SCALE GENOMIC DNA]</scope>
    <source>
        <strain>cv. Nipponbare</strain>
    </source>
</reference>
<reference key="4">
    <citation type="journal article" date="2008" name="Nucleic Acids Res.">
        <title>The rice annotation project database (RAP-DB): 2008 update.</title>
        <authorList>
            <consortium name="The rice annotation project (RAP)"/>
        </authorList>
    </citation>
    <scope>GENOME REANNOTATION</scope>
    <source>
        <strain>cv. Nipponbare</strain>
    </source>
</reference>
<reference key="5">
    <citation type="journal article" date="2013" name="Rice">
        <title>Improvement of the Oryza sativa Nipponbare reference genome using next generation sequence and optical map data.</title>
        <authorList>
            <person name="Kawahara Y."/>
            <person name="de la Bastide M."/>
            <person name="Hamilton J.P."/>
            <person name="Kanamori H."/>
            <person name="McCombie W.R."/>
            <person name="Ouyang S."/>
            <person name="Schwartz D.C."/>
            <person name="Tanaka T."/>
            <person name="Wu J."/>
            <person name="Zhou S."/>
            <person name="Childs K.L."/>
            <person name="Davidson R.M."/>
            <person name="Lin H."/>
            <person name="Quesada-Ocampo L."/>
            <person name="Vaillancourt B."/>
            <person name="Sakai H."/>
            <person name="Lee S.S."/>
            <person name="Kim J."/>
            <person name="Numa H."/>
            <person name="Itoh T."/>
            <person name="Buell C.R."/>
            <person name="Matsumoto T."/>
        </authorList>
    </citation>
    <scope>GENOME REANNOTATION</scope>
    <source>
        <strain>cv. Nipponbare</strain>
    </source>
</reference>
<reference key="6">
    <citation type="journal article" date="2000" name="Planta">
        <title>The cell cycle genes cycA1;1 and cdc2Os-3 are coordinately regulated by gibberellin in planta.</title>
        <authorList>
            <person name="Fabian T."/>
            <person name="Lorbiecke R."/>
            <person name="Umeda M."/>
            <person name="Sauter M."/>
        </authorList>
    </citation>
    <scope>FUNCTION</scope>
    <scope>TISSUE SPECIFICITY</scope>
    <scope>DEVELOPMENTAL STAGE</scope>
    <scope>INDUCTION</scope>
</reference>
<reference key="7">
    <citation type="journal article" date="2006" name="Mol. Genet. Genomics">
        <title>Genome-wide analysis of cyclin family in rice (Oryza sativa L.).</title>
        <authorList>
            <person name="La H."/>
            <person name="Li J."/>
            <person name="Ji Z."/>
            <person name="Cheng Y."/>
            <person name="Li X."/>
            <person name="Jiang S."/>
            <person name="Venkatesh P.N."/>
            <person name="Ramachandran S."/>
        </authorList>
    </citation>
    <scope>NOMENCLATURE</scope>
</reference>
<name>CCA11_ORYSJ</name>
<sequence>MSSNLAASRRSSSSSSVAAAAAAKRPAVGEGGGGGGGKAAAGAAAAKKRVALSNISNVAAGGGAPGKAGNAKLNLAASAAPVKKGSLASGRNVGTNRASAVKSASAKPAPAISRHESATQKESVLPPKVPSIVPTAALAPVTVPCSSFVSPMHSGDSVSVDETMSTCDSMKSPEFEYIDNGDSSSVLGSLQRRANENLRISEDRDVEETKWKKDAPSPMEIDQICDVDNNYEDPQLCATLASDIYMHLREAETRKRPSTDFMETIQKDVNPSMRAILIDWLVEVAEEYRLVPDTLYLTVNYIDRYLSGNEINRQRLQLLGVACMLIAAKYEEICAPQVEEFCYITDNTYFRDEVLEMEASVLNYLKFEVTAPTAKCFLRRFVRVAQVSDEDPALHLEFLANYVAELSLLEYNLLSYPPSLVAASAIFLAKFILQPTKHPWNSTLAHYTQYKSSELSDCVKALHRLFSVGPGSNLPAIREKYTQHKYKFVAKKPCPPSIPTEFFRDATC</sequence>
<evidence type="ECO:0000256" key="1">
    <source>
        <dbReference type="SAM" id="MobiDB-lite"/>
    </source>
</evidence>
<evidence type="ECO:0000269" key="2">
    <source>
    </source>
</evidence>
<evidence type="ECO:0000269" key="3">
    <source>
    </source>
</evidence>
<evidence type="ECO:0000305" key="4"/>
<gene>
    <name type="primary">CYCA1-1</name>
    <name type="synonym">CYCA1</name>
    <name type="ordered locus">Os01g0233500</name>
    <name type="ordered locus">LOC_Os01g13260</name>
    <name type="ORF">P0702F03.11</name>
</gene>
<comment type="function">
    <text evidence="2 3">Involved in the control of the cell cycle at the G2/M (mitosis) transition.</text>
</comment>
<comment type="tissue specificity">
    <text evidence="2 3">Expressed in the dividing region of the root cap and root apex. Expressed in the intercalary meristem of internodes and in adventitious roots under submergence conditions.</text>
</comment>
<comment type="developmental stage">
    <text evidence="2 3">Expressed in the G2/M phases and disappears at the metaphase of mitosis.</text>
</comment>
<comment type="induction">
    <text evidence="3">By gibberellin (GA3) and submergence.</text>
</comment>
<comment type="similarity">
    <text evidence="4">Belongs to the cyclin family. Cyclin AB subfamily.</text>
</comment>
<protein>
    <recommendedName>
        <fullName>Cyclin-A1-1</fullName>
    </recommendedName>
    <alternativeName>
        <fullName>G2/mitotic-specific cyclin-A1-1</fullName>
        <shortName>CycA1;1</shortName>
    </alternativeName>
</protein>